<gene>
    <name evidence="1" type="primary">ligA</name>
    <name type="ordered locus">NMC0614</name>
</gene>
<keyword id="KW-0227">DNA damage</keyword>
<keyword id="KW-0234">DNA repair</keyword>
<keyword id="KW-0235">DNA replication</keyword>
<keyword id="KW-0436">Ligase</keyword>
<keyword id="KW-0460">Magnesium</keyword>
<keyword id="KW-0464">Manganese</keyword>
<keyword id="KW-0479">Metal-binding</keyword>
<keyword id="KW-0520">NAD</keyword>
<keyword id="KW-0862">Zinc</keyword>
<dbReference type="EC" id="6.5.1.2" evidence="1"/>
<dbReference type="EMBL" id="AM421808">
    <property type="protein sequence ID" value="CAM09908.1"/>
    <property type="molecule type" value="Genomic_DNA"/>
</dbReference>
<dbReference type="SMR" id="A1KSS7"/>
<dbReference type="KEGG" id="nmc:NMC0614"/>
<dbReference type="HOGENOM" id="CLU_007764_2_1_4"/>
<dbReference type="Proteomes" id="UP000002286">
    <property type="component" value="Chromosome"/>
</dbReference>
<dbReference type="GO" id="GO:0005829">
    <property type="term" value="C:cytosol"/>
    <property type="evidence" value="ECO:0007669"/>
    <property type="project" value="TreeGrafter"/>
</dbReference>
<dbReference type="GO" id="GO:0003911">
    <property type="term" value="F:DNA ligase (NAD+) activity"/>
    <property type="evidence" value="ECO:0007669"/>
    <property type="project" value="UniProtKB-UniRule"/>
</dbReference>
<dbReference type="GO" id="GO:0046872">
    <property type="term" value="F:metal ion binding"/>
    <property type="evidence" value="ECO:0007669"/>
    <property type="project" value="UniProtKB-KW"/>
</dbReference>
<dbReference type="GO" id="GO:0006281">
    <property type="term" value="P:DNA repair"/>
    <property type="evidence" value="ECO:0007669"/>
    <property type="project" value="UniProtKB-KW"/>
</dbReference>
<dbReference type="GO" id="GO:0006260">
    <property type="term" value="P:DNA replication"/>
    <property type="evidence" value="ECO:0007669"/>
    <property type="project" value="UniProtKB-KW"/>
</dbReference>
<dbReference type="CDD" id="cd17748">
    <property type="entry name" value="BRCT_DNA_ligase_like"/>
    <property type="match status" value="1"/>
</dbReference>
<dbReference type="CDD" id="cd00114">
    <property type="entry name" value="LIGANc"/>
    <property type="match status" value="1"/>
</dbReference>
<dbReference type="FunFam" id="1.10.150.20:FF:000006">
    <property type="entry name" value="DNA ligase"/>
    <property type="match status" value="1"/>
</dbReference>
<dbReference type="FunFam" id="1.10.287.610:FF:000002">
    <property type="entry name" value="DNA ligase"/>
    <property type="match status" value="1"/>
</dbReference>
<dbReference type="FunFam" id="2.40.50.140:FF:000012">
    <property type="entry name" value="DNA ligase"/>
    <property type="match status" value="1"/>
</dbReference>
<dbReference type="FunFam" id="3.30.470.30:FF:000001">
    <property type="entry name" value="DNA ligase"/>
    <property type="match status" value="1"/>
</dbReference>
<dbReference type="FunFam" id="3.40.50.10190:FF:000045">
    <property type="entry name" value="DNA ligase"/>
    <property type="match status" value="1"/>
</dbReference>
<dbReference type="Gene3D" id="6.20.10.30">
    <property type="match status" value="1"/>
</dbReference>
<dbReference type="Gene3D" id="1.10.150.20">
    <property type="entry name" value="5' to 3' exonuclease, C-terminal subdomain"/>
    <property type="match status" value="2"/>
</dbReference>
<dbReference type="Gene3D" id="3.40.50.10190">
    <property type="entry name" value="BRCT domain"/>
    <property type="match status" value="1"/>
</dbReference>
<dbReference type="Gene3D" id="3.30.470.30">
    <property type="entry name" value="DNA ligase/mRNA capping enzyme"/>
    <property type="match status" value="1"/>
</dbReference>
<dbReference type="Gene3D" id="1.10.287.610">
    <property type="entry name" value="Helix hairpin bin"/>
    <property type="match status" value="1"/>
</dbReference>
<dbReference type="Gene3D" id="2.40.50.140">
    <property type="entry name" value="Nucleic acid-binding proteins"/>
    <property type="match status" value="1"/>
</dbReference>
<dbReference type="HAMAP" id="MF_01588">
    <property type="entry name" value="DNA_ligase_A"/>
    <property type="match status" value="1"/>
</dbReference>
<dbReference type="InterPro" id="IPR001357">
    <property type="entry name" value="BRCT_dom"/>
</dbReference>
<dbReference type="InterPro" id="IPR036420">
    <property type="entry name" value="BRCT_dom_sf"/>
</dbReference>
<dbReference type="InterPro" id="IPR041663">
    <property type="entry name" value="DisA/LigA_HHH"/>
</dbReference>
<dbReference type="InterPro" id="IPR001679">
    <property type="entry name" value="DNA_ligase"/>
</dbReference>
<dbReference type="InterPro" id="IPR018239">
    <property type="entry name" value="DNA_ligase_AS"/>
</dbReference>
<dbReference type="InterPro" id="IPR033136">
    <property type="entry name" value="DNA_ligase_CS"/>
</dbReference>
<dbReference type="InterPro" id="IPR013839">
    <property type="entry name" value="DNAligase_adenylation"/>
</dbReference>
<dbReference type="InterPro" id="IPR013840">
    <property type="entry name" value="DNAligase_N"/>
</dbReference>
<dbReference type="InterPro" id="IPR012340">
    <property type="entry name" value="NA-bd_OB-fold"/>
</dbReference>
<dbReference type="InterPro" id="IPR004150">
    <property type="entry name" value="NAD_DNA_ligase_OB"/>
</dbReference>
<dbReference type="InterPro" id="IPR010994">
    <property type="entry name" value="RuvA_2-like"/>
</dbReference>
<dbReference type="InterPro" id="IPR004149">
    <property type="entry name" value="Znf_DNAligase_C4"/>
</dbReference>
<dbReference type="NCBIfam" id="TIGR00575">
    <property type="entry name" value="dnlj"/>
    <property type="match status" value="1"/>
</dbReference>
<dbReference type="NCBIfam" id="NF005932">
    <property type="entry name" value="PRK07956.1"/>
    <property type="match status" value="1"/>
</dbReference>
<dbReference type="PANTHER" id="PTHR23389">
    <property type="entry name" value="CHROMOSOME TRANSMISSION FIDELITY FACTOR 18"/>
    <property type="match status" value="1"/>
</dbReference>
<dbReference type="PANTHER" id="PTHR23389:SF9">
    <property type="entry name" value="DNA LIGASE"/>
    <property type="match status" value="1"/>
</dbReference>
<dbReference type="Pfam" id="PF00533">
    <property type="entry name" value="BRCT"/>
    <property type="match status" value="1"/>
</dbReference>
<dbReference type="Pfam" id="PF01653">
    <property type="entry name" value="DNA_ligase_aden"/>
    <property type="match status" value="1"/>
</dbReference>
<dbReference type="Pfam" id="PF03120">
    <property type="entry name" value="DNA_ligase_OB"/>
    <property type="match status" value="1"/>
</dbReference>
<dbReference type="Pfam" id="PF03119">
    <property type="entry name" value="DNA_ligase_ZBD"/>
    <property type="match status" value="1"/>
</dbReference>
<dbReference type="Pfam" id="PF12826">
    <property type="entry name" value="HHH_2"/>
    <property type="match status" value="1"/>
</dbReference>
<dbReference type="SMART" id="SM00292">
    <property type="entry name" value="BRCT"/>
    <property type="match status" value="1"/>
</dbReference>
<dbReference type="SMART" id="SM00532">
    <property type="entry name" value="LIGANc"/>
    <property type="match status" value="1"/>
</dbReference>
<dbReference type="SUPFAM" id="SSF52113">
    <property type="entry name" value="BRCT domain"/>
    <property type="match status" value="1"/>
</dbReference>
<dbReference type="SUPFAM" id="SSF56091">
    <property type="entry name" value="DNA ligase/mRNA capping enzyme, catalytic domain"/>
    <property type="match status" value="1"/>
</dbReference>
<dbReference type="SUPFAM" id="SSF50249">
    <property type="entry name" value="Nucleic acid-binding proteins"/>
    <property type="match status" value="1"/>
</dbReference>
<dbReference type="SUPFAM" id="SSF47781">
    <property type="entry name" value="RuvA domain 2-like"/>
    <property type="match status" value="1"/>
</dbReference>
<dbReference type="PROSITE" id="PS50172">
    <property type="entry name" value="BRCT"/>
    <property type="match status" value="1"/>
</dbReference>
<dbReference type="PROSITE" id="PS01055">
    <property type="entry name" value="DNA_LIGASE_N1"/>
    <property type="match status" value="1"/>
</dbReference>
<dbReference type="PROSITE" id="PS01056">
    <property type="entry name" value="DNA_LIGASE_N2"/>
    <property type="match status" value="1"/>
</dbReference>
<proteinExistence type="inferred from homology"/>
<evidence type="ECO:0000255" key="1">
    <source>
        <dbReference type="HAMAP-Rule" id="MF_01588"/>
    </source>
</evidence>
<evidence type="ECO:0000256" key="2">
    <source>
        <dbReference type="SAM" id="MobiDB-lite"/>
    </source>
</evidence>
<feature type="chain" id="PRO_0000313333" description="DNA ligase">
    <location>
        <begin position="1"/>
        <end position="841"/>
    </location>
</feature>
<feature type="domain" description="BRCT" evidence="1">
    <location>
        <begin position="764"/>
        <end position="841"/>
    </location>
</feature>
<feature type="region of interest" description="Disordered" evidence="2">
    <location>
        <begin position="554"/>
        <end position="575"/>
    </location>
</feature>
<feature type="compositionally biased region" description="Polar residues" evidence="2">
    <location>
        <begin position="561"/>
        <end position="570"/>
    </location>
</feature>
<feature type="active site" description="N6-AMP-lysine intermediate" evidence="1">
    <location>
        <position position="145"/>
    </location>
</feature>
<feature type="binding site" evidence="1">
    <location>
        <begin position="54"/>
        <end position="58"/>
    </location>
    <ligand>
        <name>NAD(+)</name>
        <dbReference type="ChEBI" id="CHEBI:57540"/>
    </ligand>
</feature>
<feature type="binding site" evidence="1">
    <location>
        <begin position="103"/>
        <end position="104"/>
    </location>
    <ligand>
        <name>NAD(+)</name>
        <dbReference type="ChEBI" id="CHEBI:57540"/>
    </ligand>
</feature>
<feature type="binding site" evidence="1">
    <location>
        <position position="143"/>
    </location>
    <ligand>
        <name>NAD(+)</name>
        <dbReference type="ChEBI" id="CHEBI:57540"/>
    </ligand>
</feature>
<feature type="binding site" evidence="1">
    <location>
        <position position="166"/>
    </location>
    <ligand>
        <name>NAD(+)</name>
        <dbReference type="ChEBI" id="CHEBI:57540"/>
    </ligand>
</feature>
<feature type="binding site" evidence="1">
    <location>
        <position position="203"/>
    </location>
    <ligand>
        <name>NAD(+)</name>
        <dbReference type="ChEBI" id="CHEBI:57540"/>
    </ligand>
</feature>
<feature type="binding site" evidence="1">
    <location>
        <position position="321"/>
    </location>
    <ligand>
        <name>NAD(+)</name>
        <dbReference type="ChEBI" id="CHEBI:57540"/>
    </ligand>
</feature>
<feature type="binding site" evidence="1">
    <location>
        <position position="345"/>
    </location>
    <ligand>
        <name>NAD(+)</name>
        <dbReference type="ChEBI" id="CHEBI:57540"/>
    </ligand>
</feature>
<feature type="binding site" evidence="1">
    <location>
        <position position="471"/>
    </location>
    <ligand>
        <name>Zn(2+)</name>
        <dbReference type="ChEBI" id="CHEBI:29105"/>
    </ligand>
</feature>
<feature type="binding site" evidence="1">
    <location>
        <position position="474"/>
    </location>
    <ligand>
        <name>Zn(2+)</name>
        <dbReference type="ChEBI" id="CHEBI:29105"/>
    </ligand>
</feature>
<feature type="binding site" evidence="1">
    <location>
        <position position="489"/>
    </location>
    <ligand>
        <name>Zn(2+)</name>
        <dbReference type="ChEBI" id="CHEBI:29105"/>
    </ligand>
</feature>
<feature type="binding site" evidence="1">
    <location>
        <position position="495"/>
    </location>
    <ligand>
        <name>Zn(2+)</name>
        <dbReference type="ChEBI" id="CHEBI:29105"/>
    </ligand>
</feature>
<comment type="function">
    <text evidence="1">DNA ligase that catalyzes the formation of phosphodiester linkages between 5'-phosphoryl and 3'-hydroxyl groups in double-stranded DNA using NAD as a coenzyme and as the energy source for the reaction. It is essential for DNA replication and repair of damaged DNA.</text>
</comment>
<comment type="catalytic activity">
    <reaction evidence="1">
        <text>NAD(+) + (deoxyribonucleotide)n-3'-hydroxyl + 5'-phospho-(deoxyribonucleotide)m = (deoxyribonucleotide)n+m + AMP + beta-nicotinamide D-nucleotide.</text>
        <dbReference type="EC" id="6.5.1.2"/>
    </reaction>
</comment>
<comment type="cofactor">
    <cofactor evidence="1">
        <name>Mg(2+)</name>
        <dbReference type="ChEBI" id="CHEBI:18420"/>
    </cofactor>
    <cofactor evidence="1">
        <name>Mn(2+)</name>
        <dbReference type="ChEBI" id="CHEBI:29035"/>
    </cofactor>
</comment>
<comment type="similarity">
    <text evidence="1">Belongs to the NAD-dependent DNA ligase family. LigA subfamily.</text>
</comment>
<organism>
    <name type="scientific">Neisseria meningitidis serogroup C / serotype 2a (strain ATCC 700532 / DSM 15464 / FAM18)</name>
    <dbReference type="NCBI Taxonomy" id="272831"/>
    <lineage>
        <taxon>Bacteria</taxon>
        <taxon>Pseudomonadati</taxon>
        <taxon>Pseudomonadota</taxon>
        <taxon>Betaproteobacteria</taxon>
        <taxon>Neisseriales</taxon>
        <taxon>Neisseriaceae</taxon>
        <taxon>Neisseria</taxon>
    </lineage>
</organism>
<protein>
    <recommendedName>
        <fullName evidence="1">DNA ligase</fullName>
        <ecNumber evidence="1">6.5.1.2</ecNumber>
    </recommendedName>
    <alternativeName>
        <fullName evidence="1">Polydeoxyribonucleotide synthase [NAD(+)]</fullName>
    </alternativeName>
</protein>
<accession>A1KSS7</accession>
<reference key="1">
    <citation type="journal article" date="2007" name="PLoS Genet.">
        <title>Meningococcal genetic variation mechanisms viewed through comparative analysis of serogroup C strain FAM18.</title>
        <authorList>
            <person name="Bentley S.D."/>
            <person name="Vernikos G.S."/>
            <person name="Snyder L.A.S."/>
            <person name="Churcher C."/>
            <person name="Arrowsmith C."/>
            <person name="Chillingworth T."/>
            <person name="Cronin A."/>
            <person name="Davis P.H."/>
            <person name="Holroyd N.E."/>
            <person name="Jagels K."/>
            <person name="Maddison M."/>
            <person name="Moule S."/>
            <person name="Rabbinowitsch E."/>
            <person name="Sharp S."/>
            <person name="Unwin L."/>
            <person name="Whitehead S."/>
            <person name="Quail M.A."/>
            <person name="Achtman M."/>
            <person name="Barrell B.G."/>
            <person name="Saunders N.J."/>
            <person name="Parkhill J."/>
        </authorList>
    </citation>
    <scope>NUCLEOTIDE SEQUENCE [LARGE SCALE GENOMIC DNA]</scope>
    <source>
        <strain>ATCC 700532 / DSM 15464 / FAM18</strain>
    </source>
</reference>
<name>DNLJ_NEIMF</name>
<sequence>MNPNSKHNTNFTNLLKPSDSDIKQFAAQHIRHLTDLLNRYAYEYYTLDAPSVPDAEYDKLFRELEALELNHPELKLPDSPTQRVGGEPLAGFAEVRHEVPMLSLTNAFSPQDENGVFDHAEMYAFDQRVRDGLDGGKPEYVIEPKFDGLAISLLYRDGVLVQAATRGDGTTGEDVTQNIKTVSNIPLRLHGENTPELIEVRGEVLMLKADFVALNKRQAENGQKPFANPRNAAAGSLRQLDSRITAQRKLHFFPYSVARQQDGFVAEEHIQELAYFQALGFSLPNGNFGCFKNIDEVLAFYEHMQQKRPELPYEIDGMVVKVNSLAQQHELGFISRAPRWAVAHKFPAEEALTIVEAIDVQIGRTGAVTPVARLQPVFVGGVTVTNATLHNQDEVSRKDVRVGDTVVVRRAGDVIPEVVRVIFERRPMRETAVAVSDGIGHRQDDLFAETPSANQTQSVPLHKPYRLPTHCPICRSEIEREEGEAVARCSGGMLCQAQRAQGLIHFASRKAMDIDGLGEKQIEQLVAQDLVRHFADLYRLDIPTLQKMKETADKTVAESDQMPSEGSSVGASGKHKKQPVKWAENILAGIEASKTPELARFLFALGIRHVGERTAKTLAQAFGTLERVRRAPEPVLACLPDIGTVVARSIAHFFAQAEQQAMIDELLAAGVAPQTQAVTIPPARHAEPQRWIARLPGFKISENKAQALWELAGKNIEGLQTDKALPTDWQAWRSEPQNAALLENLKTFFAQMPSEDEAAQGSDGINKAVAGKTFVLTGTLPTLKRDQAQSLIEAAGGKVSGSVSKKTDYVVAGEAAGSKLEKANALGVSVLSEAELLTLLG</sequence>